<sequence>MLEQGLLVTAGVAFLISVALSPLFIPFLRKLKFGQSIRDEGPKSHQKKSGTPTMGGIVIYVSMMVTSLIMAIKFNHLGAEVSLLLLVTFGYGLIGFLDDYIKVVKKRNLGLTSKQKLVGQLVIAIAFFLIGKGQAFHTYIMIPGTDVKFELGWAYFVLVLFMLIGGSNAVNLTDGLDGLLSGTAAIAFGAFSIIAVAQEQFGVAIFCMAVVGAVLGFLVFNANPAKVFMGDTGSLALGGAIAAVAILLKQELLLVIIGGVFVMETLSVIIQVISFKTTGKRVFKMSPLHHHYELCGWSEWRVVVTFWSVGFLLAVLGIYIGVWM</sequence>
<reference key="1">
    <citation type="submission" date="2008-10" db="EMBL/GenBank/DDBJ databases">
        <title>Genome sequence of Bacillus cereus G9842.</title>
        <authorList>
            <person name="Dodson R.J."/>
            <person name="Durkin A.S."/>
            <person name="Rosovitz M.J."/>
            <person name="Rasko D.A."/>
            <person name="Hoffmaster A."/>
            <person name="Ravel J."/>
            <person name="Sutton G."/>
        </authorList>
    </citation>
    <scope>NUCLEOTIDE SEQUENCE [LARGE SCALE GENOMIC DNA]</scope>
    <source>
        <strain>G9842</strain>
    </source>
</reference>
<feature type="chain" id="PRO_1000116504" description="Phospho-N-acetylmuramoyl-pentapeptide-transferase">
    <location>
        <begin position="1"/>
        <end position="324"/>
    </location>
</feature>
<feature type="transmembrane region" description="Helical" evidence="1">
    <location>
        <begin position="5"/>
        <end position="25"/>
    </location>
</feature>
<feature type="transmembrane region" description="Helical" evidence="1">
    <location>
        <begin position="52"/>
        <end position="72"/>
    </location>
</feature>
<feature type="transmembrane region" description="Helical" evidence="1">
    <location>
        <begin position="77"/>
        <end position="97"/>
    </location>
</feature>
<feature type="transmembrane region" description="Helical" evidence="1">
    <location>
        <begin position="122"/>
        <end position="142"/>
    </location>
</feature>
<feature type="transmembrane region" description="Helical" evidence="1">
    <location>
        <begin position="149"/>
        <end position="169"/>
    </location>
</feature>
<feature type="transmembrane region" description="Helical" evidence="1">
    <location>
        <begin position="176"/>
        <end position="196"/>
    </location>
</feature>
<feature type="transmembrane region" description="Helical" evidence="1">
    <location>
        <begin position="201"/>
        <end position="221"/>
    </location>
</feature>
<feature type="transmembrane region" description="Helical" evidence="1">
    <location>
        <begin position="227"/>
        <end position="247"/>
    </location>
</feature>
<feature type="transmembrane region" description="Helical" evidence="1">
    <location>
        <begin position="253"/>
        <end position="273"/>
    </location>
</feature>
<feature type="transmembrane region" description="Helical" evidence="1">
    <location>
        <begin position="302"/>
        <end position="322"/>
    </location>
</feature>
<organism>
    <name type="scientific">Bacillus cereus (strain G9842)</name>
    <dbReference type="NCBI Taxonomy" id="405531"/>
    <lineage>
        <taxon>Bacteria</taxon>
        <taxon>Bacillati</taxon>
        <taxon>Bacillota</taxon>
        <taxon>Bacilli</taxon>
        <taxon>Bacillales</taxon>
        <taxon>Bacillaceae</taxon>
        <taxon>Bacillus</taxon>
        <taxon>Bacillus cereus group</taxon>
    </lineage>
</organism>
<accession>B7IUS3</accession>
<dbReference type="EC" id="2.7.8.13" evidence="1"/>
<dbReference type="EMBL" id="CP001186">
    <property type="protein sequence ID" value="ACK95909.1"/>
    <property type="molecule type" value="Genomic_DNA"/>
</dbReference>
<dbReference type="RefSeq" id="WP_000893058.1">
    <property type="nucleotide sequence ID" value="NC_011772.1"/>
</dbReference>
<dbReference type="SMR" id="B7IUS3"/>
<dbReference type="GeneID" id="92799814"/>
<dbReference type="KEGG" id="bcg:BCG9842_B1227"/>
<dbReference type="HOGENOM" id="CLU_023982_0_1_9"/>
<dbReference type="UniPathway" id="UPA00219"/>
<dbReference type="Proteomes" id="UP000006744">
    <property type="component" value="Chromosome"/>
</dbReference>
<dbReference type="GO" id="GO:0005886">
    <property type="term" value="C:plasma membrane"/>
    <property type="evidence" value="ECO:0007669"/>
    <property type="project" value="UniProtKB-SubCell"/>
</dbReference>
<dbReference type="GO" id="GO:0046872">
    <property type="term" value="F:metal ion binding"/>
    <property type="evidence" value="ECO:0007669"/>
    <property type="project" value="UniProtKB-KW"/>
</dbReference>
<dbReference type="GO" id="GO:0008963">
    <property type="term" value="F:phospho-N-acetylmuramoyl-pentapeptide-transferase activity"/>
    <property type="evidence" value="ECO:0007669"/>
    <property type="project" value="UniProtKB-UniRule"/>
</dbReference>
<dbReference type="GO" id="GO:0051992">
    <property type="term" value="F:UDP-N-acetylmuramoyl-L-alanyl-D-glutamyl-meso-2,6-diaminopimelyl-D-alanyl-D-alanine:undecaprenyl-phosphate transferase activity"/>
    <property type="evidence" value="ECO:0007669"/>
    <property type="project" value="RHEA"/>
</dbReference>
<dbReference type="GO" id="GO:0051301">
    <property type="term" value="P:cell division"/>
    <property type="evidence" value="ECO:0007669"/>
    <property type="project" value="UniProtKB-KW"/>
</dbReference>
<dbReference type="GO" id="GO:0071555">
    <property type="term" value="P:cell wall organization"/>
    <property type="evidence" value="ECO:0007669"/>
    <property type="project" value="UniProtKB-KW"/>
</dbReference>
<dbReference type="GO" id="GO:0009252">
    <property type="term" value="P:peptidoglycan biosynthetic process"/>
    <property type="evidence" value="ECO:0007669"/>
    <property type="project" value="UniProtKB-UniRule"/>
</dbReference>
<dbReference type="GO" id="GO:0008360">
    <property type="term" value="P:regulation of cell shape"/>
    <property type="evidence" value="ECO:0007669"/>
    <property type="project" value="UniProtKB-KW"/>
</dbReference>
<dbReference type="CDD" id="cd06852">
    <property type="entry name" value="GT_MraY"/>
    <property type="match status" value="1"/>
</dbReference>
<dbReference type="HAMAP" id="MF_00038">
    <property type="entry name" value="MraY"/>
    <property type="match status" value="1"/>
</dbReference>
<dbReference type="InterPro" id="IPR000715">
    <property type="entry name" value="Glycosyl_transferase_4"/>
</dbReference>
<dbReference type="InterPro" id="IPR003524">
    <property type="entry name" value="PNAcMuramoyl-5peptid_Trfase"/>
</dbReference>
<dbReference type="InterPro" id="IPR018480">
    <property type="entry name" value="PNAcMuramoyl-5peptid_Trfase_CS"/>
</dbReference>
<dbReference type="NCBIfam" id="TIGR00445">
    <property type="entry name" value="mraY"/>
    <property type="match status" value="1"/>
</dbReference>
<dbReference type="PANTHER" id="PTHR22926">
    <property type="entry name" value="PHOSPHO-N-ACETYLMURAMOYL-PENTAPEPTIDE-TRANSFERASE"/>
    <property type="match status" value="1"/>
</dbReference>
<dbReference type="PANTHER" id="PTHR22926:SF5">
    <property type="entry name" value="PHOSPHO-N-ACETYLMURAMOYL-PENTAPEPTIDE-TRANSFERASE HOMOLOG"/>
    <property type="match status" value="1"/>
</dbReference>
<dbReference type="Pfam" id="PF00953">
    <property type="entry name" value="Glycos_transf_4"/>
    <property type="match status" value="1"/>
</dbReference>
<dbReference type="Pfam" id="PF10555">
    <property type="entry name" value="MraY_sig1"/>
    <property type="match status" value="1"/>
</dbReference>
<dbReference type="PROSITE" id="PS01348">
    <property type="entry name" value="MRAY_2"/>
    <property type="match status" value="1"/>
</dbReference>
<keyword id="KW-0131">Cell cycle</keyword>
<keyword id="KW-0132">Cell division</keyword>
<keyword id="KW-1003">Cell membrane</keyword>
<keyword id="KW-0133">Cell shape</keyword>
<keyword id="KW-0961">Cell wall biogenesis/degradation</keyword>
<keyword id="KW-0460">Magnesium</keyword>
<keyword id="KW-0472">Membrane</keyword>
<keyword id="KW-0479">Metal-binding</keyword>
<keyword id="KW-0573">Peptidoglycan synthesis</keyword>
<keyword id="KW-0808">Transferase</keyword>
<keyword id="KW-0812">Transmembrane</keyword>
<keyword id="KW-1133">Transmembrane helix</keyword>
<protein>
    <recommendedName>
        <fullName evidence="1">Phospho-N-acetylmuramoyl-pentapeptide-transferase</fullName>
        <ecNumber evidence="1">2.7.8.13</ecNumber>
    </recommendedName>
    <alternativeName>
        <fullName evidence="1">UDP-MurNAc-pentapeptide phosphotransferase</fullName>
    </alternativeName>
</protein>
<evidence type="ECO:0000255" key="1">
    <source>
        <dbReference type="HAMAP-Rule" id="MF_00038"/>
    </source>
</evidence>
<gene>
    <name evidence="1" type="primary">mraY</name>
    <name type="ordered locus">BCG9842_B1227</name>
</gene>
<comment type="function">
    <text evidence="1">Catalyzes the initial step of the lipid cycle reactions in the biosynthesis of the cell wall peptidoglycan: transfers peptidoglycan precursor phospho-MurNAc-pentapeptide from UDP-MurNAc-pentapeptide onto the lipid carrier undecaprenyl phosphate, yielding undecaprenyl-pyrophosphoryl-MurNAc-pentapeptide, known as lipid I.</text>
</comment>
<comment type="catalytic activity">
    <reaction evidence="1">
        <text>UDP-N-acetyl-alpha-D-muramoyl-L-alanyl-gamma-D-glutamyl-meso-2,6-diaminopimeloyl-D-alanyl-D-alanine + di-trans,octa-cis-undecaprenyl phosphate = di-trans,octa-cis-undecaprenyl diphospho-N-acetyl-alpha-D-muramoyl-L-alanyl-D-glutamyl-meso-2,6-diaminopimeloyl-D-alanyl-D-alanine + UMP</text>
        <dbReference type="Rhea" id="RHEA:28386"/>
        <dbReference type="ChEBI" id="CHEBI:57865"/>
        <dbReference type="ChEBI" id="CHEBI:60392"/>
        <dbReference type="ChEBI" id="CHEBI:61386"/>
        <dbReference type="ChEBI" id="CHEBI:61387"/>
        <dbReference type="EC" id="2.7.8.13"/>
    </reaction>
</comment>
<comment type="cofactor">
    <cofactor evidence="1">
        <name>Mg(2+)</name>
        <dbReference type="ChEBI" id="CHEBI:18420"/>
    </cofactor>
</comment>
<comment type="pathway">
    <text evidence="1">Cell wall biogenesis; peptidoglycan biosynthesis.</text>
</comment>
<comment type="subcellular location">
    <subcellularLocation>
        <location evidence="1">Cell membrane</location>
        <topology evidence="1">Multi-pass membrane protein</topology>
    </subcellularLocation>
</comment>
<comment type="similarity">
    <text evidence="1">Belongs to the glycosyltransferase 4 family. MraY subfamily.</text>
</comment>
<proteinExistence type="inferred from homology"/>
<name>MRAY_BACC2</name>